<protein>
    <recommendedName>
        <fullName>Insulin receptor-related protein</fullName>
        <shortName>IRR</shortName>
        <ecNumber>2.7.10.1</ecNumber>
    </recommendedName>
    <alternativeName>
        <fullName>IR-related receptor</fullName>
    </alternativeName>
    <component>
        <recommendedName>
            <fullName>Insulin receptor-related protein alpha chain</fullName>
        </recommendedName>
    </component>
    <component>
        <recommendedName>
            <fullName>Insulin receptor-related protein beta chain</fullName>
        </recommendedName>
    </component>
</protein>
<sequence>MAVPALWPWGVHLLMSLLSLGSGLDTLEVCPSLDIRSEVTELRRLENCSVVEGHLQILLMFAATGEDFRGLSFPRLTQVTDYLLLFRVYGLESLRDLFPNLTVIRGTRLFLGYALIIFEMPHLRDVGLPSLGAVLRGAVRVEKNQELCHLSTIDWGLLQPAPGTNHIVGNKLGEECADVCPGVLGAAGEPCSRTTFSGRTDYRCWTSSHCQKVCPCPRGMACTAGGDCCHSECLGGCSQPEDPRACVACRHLYFQGVCLRACPPGTYQYESWRCVTAELCAHLREVPGLATTFGIYEGSCLAQCPPGFTRNGSSIFCHKCEGLCPKECKVGTKTIDSVQATQDLVGCTHVEGNLILNLRQGYNLEPELQRNLGLVETITGFLKIKHSFALVTLGFFKNLKLIRGDSMVDGNYTLYVLDNQNLQQLGSWVTAGLTIPVGKIYFAFNPRLCLEHIYQLEEVTGTRGRQSKAEINPRTNGDRAACQTRTLRFVFNLTEEDRILLRWERYEPLEARDLLSFIVYYKESPFQNATEHVGPDACGTQSWNLLDVELPLSRTQEPGVTLAPLKPWTQYAVFVRAITLTTAEDSPHQGAQSPIVYLRTLPAAPTVPQDVISTSNSSSHLLVRWKPPVQRNGNITYYLVLWQRLAEDGDLYINDYCHRGLRLPTSSHDTRFDREDPALEAEPEQGCCPCQHSPPGQALPALEAQEVTFQKKFENFLHHAITIPKAPWKVTSINKNPQRDSERHRREAGLLRLGKNNSDFEIQEDKVPRERAILSGLRHFTEYRIDIHACNHAAHTVGCSAATFVFARTMPHREADGIPGKVAWKAAGKSSVTLHWLEPPDPNGLILKYEIKYRRLGEEATVLCVSRLRYAKVGGVHLALLPPGNYSAKVRATSLAGNGSWTDGVTFYITDLEEEDTGGMRIFLTVTPVGFMLLVTLAALGFFYSRKRNSTLYTSVNPEYFSASHMYVPDEWEVPREQIAIIRELGQGSFGMVYEGLARGLEAGEESTPVALKTVNELASARERVEFLKEASVMKAFKCHHVVRLLGVVSQGQPTLVIMELMTRGDLKSHLRSLRPEAENNPGLPQPALSDMIQMAGEIADGMAYLAAKKFVHRDLAARNCMVSQDFTVKIGDFGMTRDVYETDYYRKGGKGLLPVRWMAPESLKDGIFTTHSDVWSFGVVLWEIVTLAEQPYQGLSNEQVLKFVMDGGVLEELENCPIQLQELMRLCWQHSPRLRPTFVHILDRIQDELRPSFRLCSFYYSPECQRGQASLLPTEAEPDSPPTLNGASDYSAPNGGPGH</sequence>
<evidence type="ECO:0000250" key="1"/>
<evidence type="ECO:0000255" key="2"/>
<evidence type="ECO:0000255" key="3">
    <source>
        <dbReference type="PROSITE-ProRule" id="PRU00159"/>
    </source>
</evidence>
<evidence type="ECO:0000255" key="4">
    <source>
        <dbReference type="PROSITE-ProRule" id="PRU00316"/>
    </source>
</evidence>
<evidence type="ECO:0000255" key="5">
    <source>
        <dbReference type="PROSITE-ProRule" id="PRU10028"/>
    </source>
</evidence>
<evidence type="ECO:0000256" key="6">
    <source>
        <dbReference type="SAM" id="MobiDB-lite"/>
    </source>
</evidence>
<evidence type="ECO:0000269" key="7">
    <source>
    </source>
</evidence>
<evidence type="ECO:0000269" key="8">
    <source>
    </source>
</evidence>
<evidence type="ECO:0000269" key="9">
    <source>
    </source>
</evidence>
<evidence type="ECO:0000305" key="10"/>
<proteinExistence type="evidence at protein level"/>
<feature type="signal peptide" evidence="2">
    <location>
        <begin position="1"/>
        <end position="26"/>
    </location>
</feature>
<feature type="chain" id="PRO_0000016704" description="Insulin receptor-related protein">
    <location>
        <begin position="27"/>
        <end position="1300"/>
    </location>
</feature>
<feature type="chain" id="PRO_0000016705" description="Insulin receptor-related protein alpha chain" evidence="10">
    <location>
        <begin position="27"/>
        <end position="742"/>
    </location>
</feature>
<feature type="chain" id="PRO_0000016706" description="Insulin receptor-related protein beta chain" evidence="10">
    <location>
        <begin position="747"/>
        <end position="1300"/>
    </location>
</feature>
<feature type="topological domain" description="Extracellular" evidence="2">
    <location>
        <begin position="747"/>
        <end position="921"/>
    </location>
</feature>
<feature type="transmembrane region" description="Helical" evidence="2">
    <location>
        <begin position="922"/>
        <end position="943"/>
    </location>
</feature>
<feature type="topological domain" description="Cytoplasmic" evidence="2">
    <location>
        <begin position="944"/>
        <end position="1300"/>
    </location>
</feature>
<feature type="domain" description="Fibronectin type-III 1" evidence="4">
    <location>
        <begin position="483"/>
        <end position="603"/>
    </location>
</feature>
<feature type="domain" description="Fibronectin type-III 2" evidence="4">
    <location>
        <begin position="607"/>
        <end position="707"/>
    </location>
</feature>
<feature type="domain" description="Fibronectin type-III 3" evidence="4">
    <location>
        <begin position="818"/>
        <end position="913"/>
    </location>
</feature>
<feature type="domain" description="Protein kinase" evidence="3">
    <location>
        <begin position="979"/>
        <end position="1254"/>
    </location>
</feature>
<feature type="region of interest" description="Disordered" evidence="6">
    <location>
        <begin position="1273"/>
        <end position="1300"/>
    </location>
</feature>
<feature type="active site" description="Proton acceptor" evidence="3 5">
    <location>
        <position position="1115"/>
    </location>
</feature>
<feature type="binding site" evidence="3">
    <location>
        <begin position="985"/>
        <end position="993"/>
    </location>
    <ligand>
        <name>ATP</name>
        <dbReference type="ChEBI" id="CHEBI:30616"/>
    </ligand>
</feature>
<feature type="binding site" evidence="3">
    <location>
        <position position="1013"/>
    </location>
    <ligand>
        <name>ATP</name>
        <dbReference type="ChEBI" id="CHEBI:30616"/>
    </ligand>
</feature>
<feature type="modified residue" description="Phosphotyrosine; by autocatalysis" evidence="1">
    <location>
        <position position="1145"/>
    </location>
</feature>
<feature type="modified residue" description="Phosphotyrosine; by autocatalysis" evidence="1">
    <location>
        <position position="1146"/>
    </location>
</feature>
<feature type="glycosylation site" description="N-linked (GlcNAc...) asparagine" evidence="2">
    <location>
        <position position="47"/>
    </location>
</feature>
<feature type="glycosylation site" description="N-linked (GlcNAc...) asparagine" evidence="2">
    <location>
        <position position="100"/>
    </location>
</feature>
<feature type="glycosylation site" description="N-linked (GlcNAc...) asparagine" evidence="2">
    <location>
        <position position="311"/>
    </location>
</feature>
<feature type="glycosylation site" description="N-linked (GlcNAc...) asparagine" evidence="2">
    <location>
        <position position="411"/>
    </location>
</feature>
<feature type="glycosylation site" description="N-linked (GlcNAc...) asparagine" evidence="2">
    <location>
        <position position="492"/>
    </location>
</feature>
<feature type="glycosylation site" description="N-linked (GlcNAc...) asparagine" evidence="2">
    <location>
        <position position="528"/>
    </location>
</feature>
<feature type="glycosylation site" description="N-linked (GlcNAc...) asparagine" evidence="2">
    <location>
        <position position="616"/>
    </location>
</feature>
<feature type="glycosylation site" description="N-linked (GlcNAc...) asparagine" evidence="2">
    <location>
        <position position="634"/>
    </location>
</feature>
<feature type="glycosylation site" description="N-linked (GlcNAc...) asparagine" evidence="2">
    <location>
        <position position="756"/>
    </location>
</feature>
<feature type="glycosylation site" description="N-linked (GlcNAc...) asparagine" evidence="2">
    <location>
        <position position="885"/>
    </location>
</feature>
<feature type="glycosylation site" description="N-linked (GlcNAc...) asparagine" evidence="2">
    <location>
        <position position="898"/>
    </location>
</feature>
<feature type="disulfide bond" evidence="1">
    <location>
        <begin position="214"/>
        <end position="222"/>
    </location>
</feature>
<feature type="disulfide bond" evidence="1">
    <location>
        <begin position="216"/>
        <end position="228"/>
    </location>
</feature>
<feature type="disulfide bond" evidence="1">
    <location>
        <begin position="229"/>
        <end position="237"/>
    </location>
</feature>
<feature type="disulfide bond" evidence="1">
    <location>
        <begin position="233"/>
        <end position="246"/>
    </location>
</feature>
<feature type="disulfide bond" evidence="1">
    <location>
        <begin position="249"/>
        <end position="258"/>
    </location>
</feature>
<feature type="disulfide bond" evidence="1">
    <location>
        <begin position="262"/>
        <end position="274"/>
    </location>
</feature>
<feature type="disulfide bond" evidence="1">
    <location>
        <begin position="280"/>
        <end position="300"/>
    </location>
</feature>
<feature type="disulfide bond" evidence="1">
    <location>
        <begin position="304"/>
        <end position="317"/>
    </location>
</feature>
<feature type="disulfide bond" evidence="1">
    <location>
        <begin position="320"/>
        <end position="324"/>
    </location>
</feature>
<feature type="disulfide bond" description="Interchain (between alpha and beta chains)" evidence="2">
    <location>
        <begin position="657"/>
        <end position="864"/>
    </location>
</feature>
<feature type="sequence conflict" description="In Ref. 1; BAA77835." evidence="10" ref="1">
    <original>W</original>
    <variation>G</variation>
    <location>
        <position position="272"/>
    </location>
</feature>
<comment type="function">
    <text evidence="9">Receptor with tyrosine-protein kinase activity. Functions as a pH sensing receptor which is activated by increased extracellular pH. Activates an intracellular signaling pathway that involves IRS1 and AKT1/PKB.</text>
</comment>
<comment type="catalytic activity">
    <reaction evidence="5">
        <text>L-tyrosyl-[protein] + ATP = O-phospho-L-tyrosyl-[protein] + ADP + H(+)</text>
        <dbReference type="Rhea" id="RHEA:10596"/>
        <dbReference type="Rhea" id="RHEA-COMP:10136"/>
        <dbReference type="Rhea" id="RHEA-COMP:20101"/>
        <dbReference type="ChEBI" id="CHEBI:15378"/>
        <dbReference type="ChEBI" id="CHEBI:30616"/>
        <dbReference type="ChEBI" id="CHEBI:46858"/>
        <dbReference type="ChEBI" id="CHEBI:61978"/>
        <dbReference type="ChEBI" id="CHEBI:456216"/>
        <dbReference type="EC" id="2.7.10.1"/>
    </reaction>
</comment>
<comment type="subunit">
    <text evidence="1">Probable tetramer of 2 alpha and 2 beta chains linked by disulfide bonds. The alpha chains contribute to the formation of the ligand-binding domain, while the beta chains carry the kinase domain (By similarity).</text>
</comment>
<comment type="subcellular location">
    <subcellularLocation>
        <location evidence="1">Membrane</location>
        <topology evidence="1">Single-pass type I membrane protein</topology>
    </subcellularLocation>
</comment>
<comment type="tissue specificity">
    <text evidence="7">Highly expressed in the islets as well as in pancreatic beta-cells.</text>
</comment>
<comment type="domain">
    <text evidence="1">The extracellular domain is required for sensing alterations in external pH.</text>
</comment>
<comment type="PTM">
    <text>Autophosphorylated on tyrosine residues between pH 7.9 and pH 10.5.</text>
</comment>
<comment type="disruption phenotype">
    <text evidence="8 9">Renal function is impaired, with reduced ability of the collecting duct to adapt to alkalosis.</text>
</comment>
<comment type="similarity">
    <text evidence="3">Belongs to the protein kinase superfamily. Tyr protein kinase family. Insulin receptor subfamily.</text>
</comment>
<name>INSRR_MOUSE</name>
<dbReference type="EC" id="2.7.10.1"/>
<dbReference type="EMBL" id="AB007135">
    <property type="protein sequence ID" value="BAA77835.1"/>
    <property type="molecule type" value="mRNA"/>
</dbReference>
<dbReference type="EMBL" id="CH466547">
    <property type="protein sequence ID" value="EDL15346.1"/>
    <property type="molecule type" value="Genomic_DNA"/>
</dbReference>
<dbReference type="EMBL" id="BC137855">
    <property type="protein sequence ID" value="AAI37856.1"/>
    <property type="molecule type" value="mRNA"/>
</dbReference>
<dbReference type="CCDS" id="CCDS17454.1"/>
<dbReference type="RefSeq" id="NP_035962.2">
    <property type="nucleotide sequence ID" value="NM_011832.2"/>
</dbReference>
<dbReference type="SMR" id="Q9WTL4"/>
<dbReference type="BioGRID" id="204794">
    <property type="interactions" value="3"/>
</dbReference>
<dbReference type="FunCoup" id="Q9WTL4">
    <property type="interactions" value="12"/>
</dbReference>
<dbReference type="STRING" id="10090.ENSMUSP00000029711"/>
<dbReference type="GlyCosmos" id="Q9WTL4">
    <property type="glycosylation" value="11 sites, No reported glycans"/>
</dbReference>
<dbReference type="GlyGen" id="Q9WTL4">
    <property type="glycosylation" value="13 sites, 2 N-linked glycans (3 sites)"/>
</dbReference>
<dbReference type="iPTMnet" id="Q9WTL4"/>
<dbReference type="PhosphoSitePlus" id="Q9WTL4"/>
<dbReference type="SwissPalm" id="Q9WTL4"/>
<dbReference type="PaxDb" id="10090-ENSMUSP00000029711"/>
<dbReference type="PeptideAtlas" id="Q9WTL4"/>
<dbReference type="ProteomicsDB" id="267251"/>
<dbReference type="Antibodypedia" id="20446">
    <property type="antibodies" value="387 antibodies from 34 providers"/>
</dbReference>
<dbReference type="DNASU" id="23920"/>
<dbReference type="Ensembl" id="ENSMUST00000029711.9">
    <property type="protein sequence ID" value="ENSMUSP00000029711.3"/>
    <property type="gene ID" value="ENSMUSG00000005640.13"/>
</dbReference>
<dbReference type="GeneID" id="23920"/>
<dbReference type="KEGG" id="mmu:23920"/>
<dbReference type="UCSC" id="uc008psy.2">
    <property type="organism name" value="mouse"/>
</dbReference>
<dbReference type="AGR" id="MGI:1346037"/>
<dbReference type="CTD" id="3645"/>
<dbReference type="MGI" id="MGI:1346037">
    <property type="gene designation" value="Insrr"/>
</dbReference>
<dbReference type="VEuPathDB" id="HostDB:ENSMUSG00000005640"/>
<dbReference type="eggNOG" id="KOG1095">
    <property type="taxonomic scope" value="Eukaryota"/>
</dbReference>
<dbReference type="eggNOG" id="KOG4258">
    <property type="taxonomic scope" value="Eukaryota"/>
</dbReference>
<dbReference type="GeneTree" id="ENSGT00940000160437"/>
<dbReference type="HOGENOM" id="CLU_000288_166_0_1"/>
<dbReference type="InParanoid" id="Q9WTL4"/>
<dbReference type="OMA" id="IQRGHVY"/>
<dbReference type="OrthoDB" id="5809444at2759"/>
<dbReference type="PhylomeDB" id="Q9WTL4"/>
<dbReference type="TreeFam" id="TF351636"/>
<dbReference type="BioGRID-ORCS" id="23920">
    <property type="hits" value="1 hit in 78 CRISPR screens"/>
</dbReference>
<dbReference type="ChiTaRS" id="Insrr">
    <property type="organism name" value="mouse"/>
</dbReference>
<dbReference type="PRO" id="PR:Q9WTL4"/>
<dbReference type="Proteomes" id="UP000000589">
    <property type="component" value="Chromosome 3"/>
</dbReference>
<dbReference type="RNAct" id="Q9WTL4">
    <property type="molecule type" value="protein"/>
</dbReference>
<dbReference type="Bgee" id="ENSMUSG00000005640">
    <property type="expression patterns" value="Expressed in islet of Langerhans and 46 other cell types or tissues"/>
</dbReference>
<dbReference type="GO" id="GO:0016020">
    <property type="term" value="C:membrane"/>
    <property type="evidence" value="ECO:0007669"/>
    <property type="project" value="UniProtKB-SubCell"/>
</dbReference>
<dbReference type="GO" id="GO:0043235">
    <property type="term" value="C:receptor complex"/>
    <property type="evidence" value="ECO:0000266"/>
    <property type="project" value="MGI"/>
</dbReference>
<dbReference type="GO" id="GO:0005524">
    <property type="term" value="F:ATP binding"/>
    <property type="evidence" value="ECO:0007669"/>
    <property type="project" value="UniProtKB-KW"/>
</dbReference>
<dbReference type="GO" id="GO:0043560">
    <property type="term" value="F:insulin receptor substrate binding"/>
    <property type="evidence" value="ECO:0007669"/>
    <property type="project" value="InterPro"/>
</dbReference>
<dbReference type="GO" id="GO:0043548">
    <property type="term" value="F:phosphatidylinositol 3-kinase binding"/>
    <property type="evidence" value="ECO:0007669"/>
    <property type="project" value="InterPro"/>
</dbReference>
<dbReference type="GO" id="GO:0004714">
    <property type="term" value="F:transmembrane receptor protein tyrosine kinase activity"/>
    <property type="evidence" value="ECO:0000250"/>
    <property type="project" value="UniProtKB"/>
</dbReference>
<dbReference type="GO" id="GO:0030036">
    <property type="term" value="P:actin cytoskeleton organization"/>
    <property type="evidence" value="ECO:0000250"/>
    <property type="project" value="UniProtKB"/>
</dbReference>
<dbReference type="GO" id="GO:0007169">
    <property type="term" value="P:cell surface receptor protein tyrosine kinase signaling pathway"/>
    <property type="evidence" value="ECO:0007669"/>
    <property type="project" value="InterPro"/>
</dbReference>
<dbReference type="GO" id="GO:0071469">
    <property type="term" value="P:cellular response to alkaline pH"/>
    <property type="evidence" value="ECO:0000314"/>
    <property type="project" value="UniProtKB"/>
</dbReference>
<dbReference type="GO" id="GO:0030238">
    <property type="term" value="P:male sex determination"/>
    <property type="evidence" value="ECO:0000315"/>
    <property type="project" value="MGI"/>
</dbReference>
<dbReference type="GO" id="GO:0046777">
    <property type="term" value="P:protein autophosphorylation"/>
    <property type="evidence" value="ECO:0000314"/>
    <property type="project" value="UniProtKB"/>
</dbReference>
<dbReference type="CDD" id="cd00063">
    <property type="entry name" value="FN3"/>
    <property type="match status" value="3"/>
</dbReference>
<dbReference type="CDD" id="cd00064">
    <property type="entry name" value="FU"/>
    <property type="match status" value="1"/>
</dbReference>
<dbReference type="CDD" id="cd05032">
    <property type="entry name" value="PTKc_InsR_like"/>
    <property type="match status" value="1"/>
</dbReference>
<dbReference type="FunFam" id="1.10.510.10:FF:000050">
    <property type="entry name" value="Tyrosine-protein kinase receptor"/>
    <property type="match status" value="1"/>
</dbReference>
<dbReference type="FunFam" id="2.10.220.10:FF:000014">
    <property type="entry name" value="Tyrosine-protein kinase receptor"/>
    <property type="match status" value="1"/>
</dbReference>
<dbReference type="FunFam" id="2.60.40.10:FF:000087">
    <property type="entry name" value="Tyrosine-protein kinase receptor"/>
    <property type="match status" value="1"/>
</dbReference>
<dbReference type="FunFam" id="2.60.40.10:FF:000108">
    <property type="entry name" value="Tyrosine-protein kinase receptor"/>
    <property type="match status" value="1"/>
</dbReference>
<dbReference type="FunFam" id="2.60.40.10:FF:001636">
    <property type="entry name" value="Tyrosine-protein kinase receptor"/>
    <property type="match status" value="1"/>
</dbReference>
<dbReference type="FunFam" id="3.30.200.20:FF:000026">
    <property type="entry name" value="Tyrosine-protein kinase receptor"/>
    <property type="match status" value="1"/>
</dbReference>
<dbReference type="FunFam" id="3.80.20.20:FF:000001">
    <property type="entry name" value="Tyrosine-protein kinase receptor"/>
    <property type="match status" value="1"/>
</dbReference>
<dbReference type="FunFam" id="3.80.20.20:FF:000002">
    <property type="entry name" value="Tyrosine-protein kinase receptor"/>
    <property type="match status" value="1"/>
</dbReference>
<dbReference type="Gene3D" id="2.10.220.10">
    <property type="entry name" value="Hormone Receptor, Insulin-like Growth Factor Receptor 1, Chain A, domain 2"/>
    <property type="match status" value="1"/>
</dbReference>
<dbReference type="Gene3D" id="2.60.40.10">
    <property type="entry name" value="Immunoglobulins"/>
    <property type="match status" value="3"/>
</dbReference>
<dbReference type="Gene3D" id="3.30.200.20">
    <property type="entry name" value="Phosphorylase Kinase, domain 1"/>
    <property type="match status" value="1"/>
</dbReference>
<dbReference type="Gene3D" id="3.80.20.20">
    <property type="entry name" value="Receptor L-domain"/>
    <property type="match status" value="2"/>
</dbReference>
<dbReference type="Gene3D" id="1.10.510.10">
    <property type="entry name" value="Transferase(Phosphotransferase) domain 1"/>
    <property type="match status" value="1"/>
</dbReference>
<dbReference type="InterPro" id="IPR003961">
    <property type="entry name" value="FN3_dom"/>
</dbReference>
<dbReference type="InterPro" id="IPR036116">
    <property type="entry name" value="FN3_sf"/>
</dbReference>
<dbReference type="InterPro" id="IPR006211">
    <property type="entry name" value="Furin-like_Cys-rich_dom"/>
</dbReference>
<dbReference type="InterPro" id="IPR006212">
    <property type="entry name" value="Furin_repeat"/>
</dbReference>
<dbReference type="InterPro" id="IPR009030">
    <property type="entry name" value="Growth_fac_rcpt_cys_sf"/>
</dbReference>
<dbReference type="InterPro" id="IPR013783">
    <property type="entry name" value="Ig-like_fold"/>
</dbReference>
<dbReference type="InterPro" id="IPR011009">
    <property type="entry name" value="Kinase-like_dom_sf"/>
</dbReference>
<dbReference type="InterPro" id="IPR000719">
    <property type="entry name" value="Prot_kinase_dom"/>
</dbReference>
<dbReference type="InterPro" id="IPR017441">
    <property type="entry name" value="Protein_kinase_ATP_BS"/>
</dbReference>
<dbReference type="InterPro" id="IPR000494">
    <property type="entry name" value="Rcpt_L-dom"/>
</dbReference>
<dbReference type="InterPro" id="IPR036941">
    <property type="entry name" value="Rcpt_L-dom_sf"/>
</dbReference>
<dbReference type="InterPro" id="IPR050122">
    <property type="entry name" value="RTK"/>
</dbReference>
<dbReference type="InterPro" id="IPR001245">
    <property type="entry name" value="Ser-Thr/Tyr_kinase_cat_dom"/>
</dbReference>
<dbReference type="InterPro" id="IPR008266">
    <property type="entry name" value="Tyr_kinase_AS"/>
</dbReference>
<dbReference type="InterPro" id="IPR020635">
    <property type="entry name" value="Tyr_kinase_cat_dom"/>
</dbReference>
<dbReference type="InterPro" id="IPR016246">
    <property type="entry name" value="Tyr_kinase_insulin-like_rcpt"/>
</dbReference>
<dbReference type="InterPro" id="IPR002011">
    <property type="entry name" value="Tyr_kinase_rcpt_2_CS"/>
</dbReference>
<dbReference type="PANTHER" id="PTHR24416:SF338">
    <property type="entry name" value="INSULIN RECEPTOR-RELATED PROTEIN"/>
    <property type="match status" value="1"/>
</dbReference>
<dbReference type="PANTHER" id="PTHR24416">
    <property type="entry name" value="TYROSINE-PROTEIN KINASE RECEPTOR"/>
    <property type="match status" value="1"/>
</dbReference>
<dbReference type="Pfam" id="PF00041">
    <property type="entry name" value="fn3"/>
    <property type="match status" value="1"/>
</dbReference>
<dbReference type="Pfam" id="PF00757">
    <property type="entry name" value="Furin-like"/>
    <property type="match status" value="1"/>
</dbReference>
<dbReference type="Pfam" id="PF07714">
    <property type="entry name" value="PK_Tyr_Ser-Thr"/>
    <property type="match status" value="1"/>
</dbReference>
<dbReference type="Pfam" id="PF01030">
    <property type="entry name" value="Recep_L_domain"/>
    <property type="match status" value="2"/>
</dbReference>
<dbReference type="PIRSF" id="PIRSF000620">
    <property type="entry name" value="Insulin_receptor"/>
    <property type="match status" value="1"/>
</dbReference>
<dbReference type="PRINTS" id="PR00109">
    <property type="entry name" value="TYRKINASE"/>
</dbReference>
<dbReference type="SMART" id="SM00060">
    <property type="entry name" value="FN3"/>
    <property type="match status" value="3"/>
</dbReference>
<dbReference type="SMART" id="SM00261">
    <property type="entry name" value="FU"/>
    <property type="match status" value="1"/>
</dbReference>
<dbReference type="SMART" id="SM00219">
    <property type="entry name" value="TyrKc"/>
    <property type="match status" value="1"/>
</dbReference>
<dbReference type="SUPFAM" id="SSF49265">
    <property type="entry name" value="Fibronectin type III"/>
    <property type="match status" value="3"/>
</dbReference>
<dbReference type="SUPFAM" id="SSF57184">
    <property type="entry name" value="Growth factor receptor domain"/>
    <property type="match status" value="1"/>
</dbReference>
<dbReference type="SUPFAM" id="SSF52058">
    <property type="entry name" value="L domain-like"/>
    <property type="match status" value="2"/>
</dbReference>
<dbReference type="SUPFAM" id="SSF56112">
    <property type="entry name" value="Protein kinase-like (PK-like)"/>
    <property type="match status" value="1"/>
</dbReference>
<dbReference type="PROSITE" id="PS50853">
    <property type="entry name" value="FN3"/>
    <property type="match status" value="3"/>
</dbReference>
<dbReference type="PROSITE" id="PS00107">
    <property type="entry name" value="PROTEIN_KINASE_ATP"/>
    <property type="match status" value="1"/>
</dbReference>
<dbReference type="PROSITE" id="PS50011">
    <property type="entry name" value="PROTEIN_KINASE_DOM"/>
    <property type="match status" value="1"/>
</dbReference>
<dbReference type="PROSITE" id="PS00109">
    <property type="entry name" value="PROTEIN_KINASE_TYR"/>
    <property type="match status" value="1"/>
</dbReference>
<dbReference type="PROSITE" id="PS00239">
    <property type="entry name" value="RECEPTOR_TYR_KIN_II"/>
    <property type="match status" value="1"/>
</dbReference>
<reference key="1">
    <citation type="journal article" date="1999" name="Diabetes">
        <title>Insulin receptor-related receptor is expressed in pancreatic beta-cells and stimulates tyrosine phosphorylation of insulin receptor substrate-1 and-2.</title>
        <authorList>
            <person name="Hirayama I."/>
            <person name="Tamemoto H."/>
            <person name="Yokota H."/>
            <person name="Kubo S.-K."/>
            <person name="Wang J."/>
            <person name="Kuwano H."/>
            <person name="Nagamachi Y."/>
            <person name="Takeuchi T."/>
            <person name="Izumi T."/>
        </authorList>
    </citation>
    <scope>NUCLEOTIDE SEQUENCE [MRNA]</scope>
    <scope>TISSUE SPECIFICITY</scope>
    <source>
        <tissue>Pancreas</tissue>
    </source>
</reference>
<reference key="2">
    <citation type="submission" date="2005-07" db="EMBL/GenBank/DDBJ databases">
        <authorList>
            <person name="Mural R.J."/>
            <person name="Adams M.D."/>
            <person name="Myers E.W."/>
            <person name="Smith H.O."/>
            <person name="Venter J.C."/>
        </authorList>
    </citation>
    <scope>NUCLEOTIDE SEQUENCE [LARGE SCALE GENOMIC DNA]</scope>
</reference>
<reference key="3">
    <citation type="journal article" date="2004" name="Genome Res.">
        <title>The status, quality, and expansion of the NIH full-length cDNA project: the Mammalian Gene Collection (MGC).</title>
        <authorList>
            <consortium name="The MGC Project Team"/>
        </authorList>
    </citation>
    <scope>NUCLEOTIDE SEQUENCE [LARGE SCALE MRNA]</scope>
    <source>
        <tissue>Brain</tissue>
    </source>
</reference>
<reference key="4">
    <citation type="journal article" date="2001" name="Mol. Cell. Biol.">
        <title>Preserved pancreatic beta-cell development and function in mice lacking the insulin receptor-related receptor.</title>
        <authorList>
            <person name="Kitamura T."/>
            <person name="Kido Y."/>
            <person name="Nef S."/>
            <person name="Merenmies J."/>
            <person name="Parada L.F."/>
            <person name="Accili D."/>
        </authorList>
    </citation>
    <scope>DISRUPTION PHENOTYPE</scope>
</reference>
<reference key="5">
    <citation type="journal article" date="2011" name="Cell Metab.">
        <title>Insulin receptor-related receptor as an extracellular alkali sensor.</title>
        <authorList>
            <person name="Deyev I.E."/>
            <person name="Sohet F."/>
            <person name="Vassilenko K.P."/>
            <person name="Serova O.V."/>
            <person name="Popova N.V."/>
            <person name="Zozulya S.A."/>
            <person name="Burova E.B."/>
            <person name="Houillier P."/>
            <person name="Rzhevsky D.I."/>
            <person name="Berchatova A.A."/>
            <person name="Murashev A.N."/>
            <person name="Chugunov A.O."/>
            <person name="Efremov R.G."/>
            <person name="Nikol'sky N.N."/>
            <person name="Bertelli E."/>
            <person name="Eladari D."/>
            <person name="Petrenko A.G."/>
        </authorList>
    </citation>
    <scope>DISRUPTION PHENOTYPE</scope>
    <scope>FUNCTION</scope>
    <scope>AUTOPHOSPHORYLATION</scope>
</reference>
<accession>Q9WTL4</accession>
<accession>B2RQC5</accession>
<organism>
    <name type="scientific">Mus musculus</name>
    <name type="common">Mouse</name>
    <dbReference type="NCBI Taxonomy" id="10090"/>
    <lineage>
        <taxon>Eukaryota</taxon>
        <taxon>Metazoa</taxon>
        <taxon>Chordata</taxon>
        <taxon>Craniata</taxon>
        <taxon>Vertebrata</taxon>
        <taxon>Euteleostomi</taxon>
        <taxon>Mammalia</taxon>
        <taxon>Eutheria</taxon>
        <taxon>Euarchontoglires</taxon>
        <taxon>Glires</taxon>
        <taxon>Rodentia</taxon>
        <taxon>Myomorpha</taxon>
        <taxon>Muroidea</taxon>
        <taxon>Muridae</taxon>
        <taxon>Murinae</taxon>
        <taxon>Mus</taxon>
        <taxon>Mus</taxon>
    </lineage>
</organism>
<gene>
    <name type="primary">Insrr</name>
    <name type="synonym">Irr</name>
</gene>
<keyword id="KW-0067">ATP-binding</keyword>
<keyword id="KW-0165">Cleavage on pair of basic residues</keyword>
<keyword id="KW-1015">Disulfide bond</keyword>
<keyword id="KW-0325">Glycoprotein</keyword>
<keyword id="KW-0418">Kinase</keyword>
<keyword id="KW-0472">Membrane</keyword>
<keyword id="KW-0547">Nucleotide-binding</keyword>
<keyword id="KW-0597">Phosphoprotein</keyword>
<keyword id="KW-0675">Receptor</keyword>
<keyword id="KW-1185">Reference proteome</keyword>
<keyword id="KW-0677">Repeat</keyword>
<keyword id="KW-0732">Signal</keyword>
<keyword id="KW-0808">Transferase</keyword>
<keyword id="KW-0812">Transmembrane</keyword>
<keyword id="KW-1133">Transmembrane helix</keyword>
<keyword id="KW-0829">Tyrosine-protein kinase</keyword>